<protein>
    <recommendedName>
        <fullName evidence="1">UvrABC system protein C</fullName>
        <shortName evidence="1">Protein UvrC</shortName>
    </recommendedName>
    <alternativeName>
        <fullName evidence="1">Excinuclease ABC subunit C</fullName>
    </alternativeName>
</protein>
<reference key="1">
    <citation type="journal article" date="1999" name="Science">
        <title>Genome sequence of the radioresistant bacterium Deinococcus radiodurans R1.</title>
        <authorList>
            <person name="White O."/>
            <person name="Eisen J.A."/>
            <person name="Heidelberg J.F."/>
            <person name="Hickey E.K."/>
            <person name="Peterson J.D."/>
            <person name="Dodson R.J."/>
            <person name="Haft D.H."/>
            <person name="Gwinn M.L."/>
            <person name="Nelson W.C."/>
            <person name="Richardson D.L."/>
            <person name="Moffat K.S."/>
            <person name="Qin H."/>
            <person name="Jiang L."/>
            <person name="Pamphile W."/>
            <person name="Crosby M."/>
            <person name="Shen M."/>
            <person name="Vamathevan J.J."/>
            <person name="Lam P."/>
            <person name="McDonald L.A."/>
            <person name="Utterback T.R."/>
            <person name="Zalewski C."/>
            <person name="Makarova K.S."/>
            <person name="Aravind L."/>
            <person name="Daly M.J."/>
            <person name="Minton K.W."/>
            <person name="Fleischmann R.D."/>
            <person name="Ketchum K.A."/>
            <person name="Nelson K.E."/>
            <person name="Salzberg S.L."/>
            <person name="Smith H.O."/>
            <person name="Venter J.C."/>
            <person name="Fraser C.M."/>
        </authorList>
    </citation>
    <scope>NUCLEOTIDE SEQUENCE [LARGE SCALE GENOMIC DNA]</scope>
    <source>
        <strain>ATCC 13939 / DSM 20539 / JCM 16871 / CCUG 27074 / LMG 4051 / NBRC 15346 / NCIMB 9279 / VKM B-1422 / R1</strain>
    </source>
</reference>
<comment type="function">
    <text evidence="1">The UvrABC repair system catalyzes the recognition and processing of DNA lesions. UvrC both incises the 5' and 3' sides of the lesion. The N-terminal half is responsible for the 3' incision and the C-terminal half is responsible for the 5' incision.</text>
</comment>
<comment type="subunit">
    <text evidence="1">Interacts with UvrB in an incision complex.</text>
</comment>
<comment type="subcellular location">
    <subcellularLocation>
        <location evidence="1">Cytoplasm</location>
    </subcellularLocation>
</comment>
<comment type="similarity">
    <text evidence="1">Belongs to the UvrC family.</text>
</comment>
<accession>Q9RUN0</accession>
<keyword id="KW-0002">3D-structure</keyword>
<keyword id="KW-0963">Cytoplasm</keyword>
<keyword id="KW-0227">DNA damage</keyword>
<keyword id="KW-0228">DNA excision</keyword>
<keyword id="KW-0234">DNA repair</keyword>
<keyword id="KW-0267">Excision nuclease</keyword>
<keyword id="KW-1185">Reference proteome</keyword>
<keyword id="KW-0742">SOS response</keyword>
<sequence>MHFDDLPVLPTTPGVYIFRKGGVPIYIGKANNLRSRVSQHFKAGGKSGKFTKLAESLEFISAANEVEALVLEANLIKQHRPHYNVLLKDDKHYPFLKLTNEAYPMLVVTRRVLKDGANYYGPYPDASAVRRVKHLIDTMFPLRKNSGLPMQKKPRPCLNYHMGRCLGPCIDAAQPDEYRQAVEDVKALLEGRAAPVIARLKEDMKVAAQGQDFEQAARLRDRVQAVEKLFGTEQHAFVSEETDLDFLGAAQAGEFAMVQLFRMRGGRVVGRDKRFLTGADETGLGEIIGAFVADYYTQATHVPPLILLPAEYEDAALWSEFLSRQAGRRVEMRTPKRGDKTDLIEMAQRNAAVGLDSEMALLERRGDHPGLDALKDVLALPERPWRIEGYDNSNLFGTNIVSGMVVFEGGRSRRGEHRRFKVRGLEHPDDYESMKQTIYRRFTGSLADKLPLPDLMLIDGGRGQVNAALDALKEAGVQVPVVGLAKREERLILPGRYGAQWWLETGTEVGVDRELLLPHTHPALRMLIGVRDEVHNYAVSYHRKLRGEGMLRSVFDDLPGIGQKRRDALLEHFTSLEDLAAAPVEHIAAVPGMTLRAAQSVKEFLQAREAQLPRAGG</sequence>
<proteinExistence type="evidence at protein level"/>
<gene>
    <name evidence="1" type="primary">uvrC</name>
    <name type="ordered locus">DR_1354</name>
</gene>
<dbReference type="EMBL" id="AE000513">
    <property type="protein sequence ID" value="AAF10924.1"/>
    <property type="molecule type" value="Genomic_DNA"/>
</dbReference>
<dbReference type="PIR" id="C75407">
    <property type="entry name" value="C75407"/>
</dbReference>
<dbReference type="RefSeq" id="NP_295077.1">
    <property type="nucleotide sequence ID" value="NC_001263.1"/>
</dbReference>
<dbReference type="RefSeq" id="WP_010887995.1">
    <property type="nucleotide sequence ID" value="NC_001263.1"/>
</dbReference>
<dbReference type="PDB" id="8B0Q">
    <property type="method" value="X-ray"/>
    <property type="resolution" value="1.80 A"/>
    <property type="chains" value="A=366-617"/>
</dbReference>
<dbReference type="PDBsum" id="8B0Q"/>
<dbReference type="SMR" id="Q9RUN0"/>
<dbReference type="FunCoup" id="Q9RUN0">
    <property type="interactions" value="299"/>
</dbReference>
<dbReference type="STRING" id="243230.DR_1354"/>
<dbReference type="PaxDb" id="243230-DR_1354"/>
<dbReference type="EnsemblBacteria" id="AAF10924">
    <property type="protein sequence ID" value="AAF10924"/>
    <property type="gene ID" value="DR_1354"/>
</dbReference>
<dbReference type="GeneID" id="69517599"/>
<dbReference type="KEGG" id="dra:DR_1354"/>
<dbReference type="PATRIC" id="fig|243230.17.peg.1551"/>
<dbReference type="eggNOG" id="COG0322">
    <property type="taxonomic scope" value="Bacteria"/>
</dbReference>
<dbReference type="HOGENOM" id="CLU_014841_3_2_0"/>
<dbReference type="InParanoid" id="Q9RUN0"/>
<dbReference type="OrthoDB" id="9804933at2"/>
<dbReference type="Proteomes" id="UP000002524">
    <property type="component" value="Chromosome 1"/>
</dbReference>
<dbReference type="GO" id="GO:0005737">
    <property type="term" value="C:cytoplasm"/>
    <property type="evidence" value="ECO:0007669"/>
    <property type="project" value="UniProtKB-SubCell"/>
</dbReference>
<dbReference type="GO" id="GO:0009380">
    <property type="term" value="C:excinuclease repair complex"/>
    <property type="evidence" value="ECO:0000318"/>
    <property type="project" value="GO_Central"/>
</dbReference>
<dbReference type="GO" id="GO:0003677">
    <property type="term" value="F:DNA binding"/>
    <property type="evidence" value="ECO:0007669"/>
    <property type="project" value="UniProtKB-UniRule"/>
</dbReference>
<dbReference type="GO" id="GO:0009381">
    <property type="term" value="F:excinuclease ABC activity"/>
    <property type="evidence" value="ECO:0007669"/>
    <property type="project" value="UniProtKB-UniRule"/>
</dbReference>
<dbReference type="GO" id="GO:0006974">
    <property type="term" value="P:DNA damage response"/>
    <property type="evidence" value="ECO:0000318"/>
    <property type="project" value="GO_Central"/>
</dbReference>
<dbReference type="GO" id="GO:0006289">
    <property type="term" value="P:nucleotide-excision repair"/>
    <property type="evidence" value="ECO:0007669"/>
    <property type="project" value="UniProtKB-UniRule"/>
</dbReference>
<dbReference type="GO" id="GO:0009432">
    <property type="term" value="P:SOS response"/>
    <property type="evidence" value="ECO:0007669"/>
    <property type="project" value="UniProtKB-UniRule"/>
</dbReference>
<dbReference type="CDD" id="cd10434">
    <property type="entry name" value="GIY-YIG_UvrC_Cho"/>
    <property type="match status" value="1"/>
</dbReference>
<dbReference type="FunFam" id="4.10.860.10:FF:000022">
    <property type="match status" value="1"/>
</dbReference>
<dbReference type="FunFam" id="3.30.420.340:FF:000004">
    <property type="entry name" value="UvrABC system protein C"/>
    <property type="match status" value="1"/>
</dbReference>
<dbReference type="FunFam" id="3.40.1440.10:FF:000001">
    <property type="entry name" value="UvrABC system protein C"/>
    <property type="match status" value="1"/>
</dbReference>
<dbReference type="Gene3D" id="1.10.150.20">
    <property type="entry name" value="5' to 3' exonuclease, C-terminal subdomain"/>
    <property type="match status" value="1"/>
</dbReference>
<dbReference type="Gene3D" id="3.40.1440.10">
    <property type="entry name" value="GIY-YIG endonuclease"/>
    <property type="match status" value="1"/>
</dbReference>
<dbReference type="Gene3D" id="4.10.860.10">
    <property type="entry name" value="UVR domain"/>
    <property type="match status" value="1"/>
</dbReference>
<dbReference type="Gene3D" id="3.30.420.340">
    <property type="entry name" value="UvrC, RNAse H endonuclease domain"/>
    <property type="match status" value="1"/>
</dbReference>
<dbReference type="HAMAP" id="MF_00203">
    <property type="entry name" value="UvrC"/>
    <property type="match status" value="1"/>
</dbReference>
<dbReference type="InterPro" id="IPR000305">
    <property type="entry name" value="GIY-YIG_endonuc"/>
</dbReference>
<dbReference type="InterPro" id="IPR035901">
    <property type="entry name" value="GIY-YIG_endonuc_sf"/>
</dbReference>
<dbReference type="InterPro" id="IPR047296">
    <property type="entry name" value="GIY-YIG_UvrC_Cho"/>
</dbReference>
<dbReference type="InterPro" id="IPR010994">
    <property type="entry name" value="RuvA_2-like"/>
</dbReference>
<dbReference type="InterPro" id="IPR001943">
    <property type="entry name" value="UVR_dom"/>
</dbReference>
<dbReference type="InterPro" id="IPR036876">
    <property type="entry name" value="UVR_dom_sf"/>
</dbReference>
<dbReference type="InterPro" id="IPR050066">
    <property type="entry name" value="UvrABC_protein_C"/>
</dbReference>
<dbReference type="InterPro" id="IPR004791">
    <property type="entry name" value="UvrC"/>
</dbReference>
<dbReference type="InterPro" id="IPR001162">
    <property type="entry name" value="UvrC_RNase_H_dom"/>
</dbReference>
<dbReference type="InterPro" id="IPR038476">
    <property type="entry name" value="UvrC_RNase_H_dom_sf"/>
</dbReference>
<dbReference type="NCBIfam" id="TIGR00194">
    <property type="entry name" value="uvrC"/>
    <property type="match status" value="1"/>
</dbReference>
<dbReference type="PANTHER" id="PTHR30562:SF1">
    <property type="entry name" value="UVRABC SYSTEM PROTEIN C"/>
    <property type="match status" value="1"/>
</dbReference>
<dbReference type="PANTHER" id="PTHR30562">
    <property type="entry name" value="UVRC/OXIDOREDUCTASE"/>
    <property type="match status" value="1"/>
</dbReference>
<dbReference type="Pfam" id="PF01541">
    <property type="entry name" value="GIY-YIG"/>
    <property type="match status" value="1"/>
</dbReference>
<dbReference type="Pfam" id="PF14520">
    <property type="entry name" value="HHH_5"/>
    <property type="match status" value="1"/>
</dbReference>
<dbReference type="Pfam" id="PF02151">
    <property type="entry name" value="UVR"/>
    <property type="match status" value="1"/>
</dbReference>
<dbReference type="Pfam" id="PF22920">
    <property type="entry name" value="UvrC_RNaseH"/>
    <property type="match status" value="1"/>
</dbReference>
<dbReference type="Pfam" id="PF08459">
    <property type="entry name" value="UvrC_RNaseH_dom"/>
    <property type="match status" value="1"/>
</dbReference>
<dbReference type="SMART" id="SM00465">
    <property type="entry name" value="GIYc"/>
    <property type="match status" value="1"/>
</dbReference>
<dbReference type="SUPFAM" id="SSF46600">
    <property type="entry name" value="C-terminal UvrC-binding domain of UvrB"/>
    <property type="match status" value="1"/>
</dbReference>
<dbReference type="SUPFAM" id="SSF82771">
    <property type="entry name" value="GIY-YIG endonuclease"/>
    <property type="match status" value="1"/>
</dbReference>
<dbReference type="SUPFAM" id="SSF47781">
    <property type="entry name" value="RuvA domain 2-like"/>
    <property type="match status" value="1"/>
</dbReference>
<dbReference type="PROSITE" id="PS50164">
    <property type="entry name" value="GIY_YIG"/>
    <property type="match status" value="1"/>
</dbReference>
<dbReference type="PROSITE" id="PS50151">
    <property type="entry name" value="UVR"/>
    <property type="match status" value="1"/>
</dbReference>
<dbReference type="PROSITE" id="PS50165">
    <property type="entry name" value="UVRC"/>
    <property type="match status" value="1"/>
</dbReference>
<feature type="chain" id="PRO_0000227425" description="UvrABC system protein C">
    <location>
        <begin position="1"/>
        <end position="617"/>
    </location>
</feature>
<feature type="domain" description="GIY-YIG" evidence="1">
    <location>
        <begin position="11"/>
        <end position="85"/>
    </location>
</feature>
<feature type="domain" description="UVR" evidence="1">
    <location>
        <begin position="194"/>
        <end position="229"/>
    </location>
</feature>
<feature type="helix" evidence="2">
    <location>
        <begin position="369"/>
        <end position="377"/>
    </location>
</feature>
<feature type="strand" evidence="2">
    <location>
        <begin position="386"/>
        <end position="396"/>
    </location>
</feature>
<feature type="strand" evidence="2">
    <location>
        <begin position="399"/>
        <end position="408"/>
    </location>
</feature>
<feature type="helix" evidence="2">
    <location>
        <begin position="414"/>
        <end position="416"/>
    </location>
</feature>
<feature type="strand" evidence="2">
    <location>
        <begin position="418"/>
        <end position="421"/>
    </location>
</feature>
<feature type="helix" evidence="2">
    <location>
        <begin position="430"/>
        <end position="441"/>
    </location>
</feature>
<feature type="helix" evidence="2">
    <location>
        <begin position="444"/>
        <end position="449"/>
    </location>
</feature>
<feature type="strand" evidence="2">
    <location>
        <begin position="454"/>
        <end position="460"/>
    </location>
</feature>
<feature type="helix" evidence="2">
    <location>
        <begin position="462"/>
        <end position="475"/>
    </location>
</feature>
<feature type="strand" evidence="2">
    <location>
        <begin position="481"/>
        <end position="484"/>
    </location>
</feature>
<feature type="strand" evidence="2">
    <location>
        <begin position="494"/>
        <end position="499"/>
    </location>
</feature>
<feature type="strand" evidence="2">
    <location>
        <begin position="504"/>
        <end position="507"/>
    </location>
</feature>
<feature type="helix" evidence="2">
    <location>
        <begin position="522"/>
        <end position="545"/>
    </location>
</feature>
<feature type="turn" evidence="2">
    <location>
        <begin position="554"/>
        <end position="557"/>
    </location>
</feature>
<feature type="helix" evidence="2">
    <location>
        <begin position="563"/>
        <end position="569"/>
    </location>
</feature>
<feature type="turn" evidence="2">
    <location>
        <begin position="570"/>
        <end position="572"/>
    </location>
</feature>
<feature type="helix" evidence="2">
    <location>
        <begin position="576"/>
        <end position="581"/>
    </location>
</feature>
<feature type="helix" evidence="2">
    <location>
        <begin position="584"/>
        <end position="588"/>
    </location>
</feature>
<feature type="helix" evidence="2">
    <location>
        <begin position="595"/>
        <end position="605"/>
    </location>
</feature>
<evidence type="ECO:0000255" key="1">
    <source>
        <dbReference type="HAMAP-Rule" id="MF_00203"/>
    </source>
</evidence>
<evidence type="ECO:0007829" key="2">
    <source>
        <dbReference type="PDB" id="8B0Q"/>
    </source>
</evidence>
<organism>
    <name type="scientific">Deinococcus radiodurans (strain ATCC 13939 / DSM 20539 / JCM 16871 / CCUG 27074 / LMG 4051 / NBRC 15346 / NCIMB 9279 / VKM B-1422 / R1)</name>
    <dbReference type="NCBI Taxonomy" id="243230"/>
    <lineage>
        <taxon>Bacteria</taxon>
        <taxon>Thermotogati</taxon>
        <taxon>Deinococcota</taxon>
        <taxon>Deinococci</taxon>
        <taxon>Deinococcales</taxon>
        <taxon>Deinococcaceae</taxon>
        <taxon>Deinococcus</taxon>
    </lineage>
</organism>
<name>UVRC_DEIRA</name>